<organism>
    <name type="scientific">Aspergillus clavatus (strain ATCC 1007 / CBS 513.65 / DSM 816 / NCTC 3887 / NRRL 1 / QM 1276 / 107)</name>
    <dbReference type="NCBI Taxonomy" id="344612"/>
    <lineage>
        <taxon>Eukaryota</taxon>
        <taxon>Fungi</taxon>
        <taxon>Dikarya</taxon>
        <taxon>Ascomycota</taxon>
        <taxon>Pezizomycotina</taxon>
        <taxon>Eurotiomycetes</taxon>
        <taxon>Eurotiomycetidae</taxon>
        <taxon>Eurotiales</taxon>
        <taxon>Aspergillaceae</taxon>
        <taxon>Aspergillus</taxon>
        <taxon>Aspergillus subgen. Fumigati</taxon>
    </lineage>
</organism>
<evidence type="ECO:0000255" key="1">
    <source>
        <dbReference type="HAMAP-Rule" id="MF_03111"/>
    </source>
</evidence>
<accession>A1CJA9</accession>
<keyword id="KW-0456">Lyase</keyword>
<keyword id="KW-0472">Membrane</keyword>
<keyword id="KW-0479">Metal-binding</keyword>
<keyword id="KW-0496">Mitochondrion</keyword>
<keyword id="KW-0999">Mitochondrion inner membrane</keyword>
<keyword id="KW-1185">Reference proteome</keyword>
<keyword id="KW-0809">Transit peptide</keyword>
<keyword id="KW-0831">Ubiquinone biosynthesis</keyword>
<keyword id="KW-0862">Zinc</keyword>
<feature type="transit peptide" description="Mitochondrion" evidence="1">
    <location>
        <begin position="1"/>
        <end position="30"/>
    </location>
</feature>
<feature type="chain" id="PRO_0000388094" description="Ubiquinone biosynthesis protein coq4, mitochondrial">
    <location>
        <begin position="31"/>
        <end position="284"/>
    </location>
</feature>
<feature type="binding site" evidence="1">
    <location>
        <position position="166"/>
    </location>
    <ligand>
        <name>Zn(2+)</name>
        <dbReference type="ChEBI" id="CHEBI:29105"/>
    </ligand>
</feature>
<feature type="binding site" evidence="1">
    <location>
        <position position="167"/>
    </location>
    <ligand>
        <name>Zn(2+)</name>
        <dbReference type="ChEBI" id="CHEBI:29105"/>
    </ligand>
</feature>
<feature type="binding site" evidence="1">
    <location>
        <position position="170"/>
    </location>
    <ligand>
        <name>Zn(2+)</name>
        <dbReference type="ChEBI" id="CHEBI:29105"/>
    </ligand>
</feature>
<feature type="binding site" evidence="1">
    <location>
        <position position="182"/>
    </location>
    <ligand>
        <name>Zn(2+)</name>
        <dbReference type="ChEBI" id="CHEBI:29105"/>
    </ligand>
</feature>
<name>COQ4_ASPCL</name>
<reference key="1">
    <citation type="journal article" date="2008" name="PLoS Genet.">
        <title>Genomic islands in the pathogenic filamentous fungus Aspergillus fumigatus.</title>
        <authorList>
            <person name="Fedorova N.D."/>
            <person name="Khaldi N."/>
            <person name="Joardar V.S."/>
            <person name="Maiti R."/>
            <person name="Amedeo P."/>
            <person name="Anderson M.J."/>
            <person name="Crabtree J."/>
            <person name="Silva J.C."/>
            <person name="Badger J.H."/>
            <person name="Albarraq A."/>
            <person name="Angiuoli S."/>
            <person name="Bussey H."/>
            <person name="Bowyer P."/>
            <person name="Cotty P.J."/>
            <person name="Dyer P.S."/>
            <person name="Egan A."/>
            <person name="Galens K."/>
            <person name="Fraser-Liggett C.M."/>
            <person name="Haas B.J."/>
            <person name="Inman J.M."/>
            <person name="Kent R."/>
            <person name="Lemieux S."/>
            <person name="Malavazi I."/>
            <person name="Orvis J."/>
            <person name="Roemer T."/>
            <person name="Ronning C.M."/>
            <person name="Sundaram J.P."/>
            <person name="Sutton G."/>
            <person name="Turner G."/>
            <person name="Venter J.C."/>
            <person name="White O.R."/>
            <person name="Whitty B.R."/>
            <person name="Youngman P."/>
            <person name="Wolfe K.H."/>
            <person name="Goldman G.H."/>
            <person name="Wortman J.R."/>
            <person name="Jiang B."/>
            <person name="Denning D.W."/>
            <person name="Nierman W.C."/>
        </authorList>
    </citation>
    <scope>NUCLEOTIDE SEQUENCE [LARGE SCALE GENOMIC DNA]</scope>
    <source>
        <strain>ATCC 1007 / CBS 513.65 / DSM 816 / NCTC 3887 / NRRL 1 / QM 1276 / 107</strain>
    </source>
</reference>
<sequence length="284" mass="32416">MSLLGRRGAGLAARGLTPASPAIAAYVRPFSAVNRPPPKYPGHVPLTFLERGALAVGSAVGSLLNPRRADLIAACGEATATPYFIYRLRDAMLSDPTGRRILRDRPRITSETLPMSYLRSLPENSVGRTYATWLDREGVSPDTRNSVKYIDDEECAYVMQRYRECHDFYHAVTGLPIFVEGELALKAFEFLNTLIPMTGLSIFAFVRLKPAERERFFSLHLPWAVRSGLASKELINVYWEEILEKDVDELRRELHIERPPDLREIRKMMRQQQKREKERLEQQA</sequence>
<protein>
    <recommendedName>
        <fullName evidence="1">Ubiquinone biosynthesis protein coq4, mitochondrial</fullName>
    </recommendedName>
    <alternativeName>
        <fullName>4-hydroxy-3-methoxy-5-polyprenylbenzoate decarboxylase</fullName>
        <ecNumber evidence="1">4.1.1.130</ecNumber>
    </alternativeName>
    <alternativeName>
        <fullName evidence="1">Coenzyme Q biosynthesis protein 4</fullName>
    </alternativeName>
</protein>
<dbReference type="EC" id="4.1.1.130" evidence="1"/>
<dbReference type="EMBL" id="DS027056">
    <property type="protein sequence ID" value="EAW09233.1"/>
    <property type="molecule type" value="Genomic_DNA"/>
</dbReference>
<dbReference type="RefSeq" id="XP_001270659.1">
    <property type="nucleotide sequence ID" value="XM_001270658.1"/>
</dbReference>
<dbReference type="SMR" id="A1CJA9"/>
<dbReference type="STRING" id="344612.A1CJA9"/>
<dbReference type="EnsemblFungi" id="EAW09233">
    <property type="protein sequence ID" value="EAW09233"/>
    <property type="gene ID" value="ACLA_034360"/>
</dbReference>
<dbReference type="GeneID" id="4703118"/>
<dbReference type="KEGG" id="act:ACLA_034360"/>
<dbReference type="VEuPathDB" id="FungiDB:ACLA_034360"/>
<dbReference type="eggNOG" id="KOG3244">
    <property type="taxonomic scope" value="Eukaryota"/>
</dbReference>
<dbReference type="HOGENOM" id="CLU_061241_0_0_1"/>
<dbReference type="OMA" id="YYERHFH"/>
<dbReference type="OrthoDB" id="4249at2759"/>
<dbReference type="UniPathway" id="UPA00232"/>
<dbReference type="Proteomes" id="UP000006701">
    <property type="component" value="Unassembled WGS sequence"/>
</dbReference>
<dbReference type="GO" id="GO:0031314">
    <property type="term" value="C:extrinsic component of mitochondrial inner membrane"/>
    <property type="evidence" value="ECO:0007669"/>
    <property type="project" value="UniProtKB-UniRule"/>
</dbReference>
<dbReference type="GO" id="GO:0006744">
    <property type="term" value="P:ubiquinone biosynthetic process"/>
    <property type="evidence" value="ECO:0007669"/>
    <property type="project" value="UniProtKB-UniRule"/>
</dbReference>
<dbReference type="HAMAP" id="MF_03111">
    <property type="entry name" value="Coq4"/>
    <property type="match status" value="1"/>
</dbReference>
<dbReference type="InterPro" id="IPR007715">
    <property type="entry name" value="Coq4"/>
</dbReference>
<dbReference type="InterPro" id="IPR027540">
    <property type="entry name" value="Coq4_euk"/>
</dbReference>
<dbReference type="PANTHER" id="PTHR12922">
    <property type="entry name" value="UBIQUINONE BIOSYNTHESIS PROTEIN"/>
    <property type="match status" value="1"/>
</dbReference>
<dbReference type="PANTHER" id="PTHR12922:SF7">
    <property type="entry name" value="UBIQUINONE BIOSYNTHESIS PROTEIN COQ4 HOMOLOG, MITOCHONDRIAL"/>
    <property type="match status" value="1"/>
</dbReference>
<dbReference type="Pfam" id="PF05019">
    <property type="entry name" value="Coq4"/>
    <property type="match status" value="1"/>
</dbReference>
<comment type="function">
    <text evidence="1">Lyase that catalyzes the C1-decarboxylation of 4-hydroxy-3-methoxy-5-(all-trans-polyprenyl)benzoic acid into 2-methoxy-6-(all-trans-polyprenyl)phenol during ubiquinone biosynthesis.</text>
</comment>
<comment type="catalytic activity">
    <reaction evidence="1">
        <text>a 4-hydroxy-3-methoxy-5-(all-trans-polyprenyl)benzoate + H(+) = a 2-methoxy-6-(all-trans-polyprenyl)phenol + CO2</text>
        <dbReference type="Rhea" id="RHEA:81179"/>
        <dbReference type="Rhea" id="RHEA-COMP:9551"/>
        <dbReference type="Rhea" id="RHEA-COMP:10931"/>
        <dbReference type="ChEBI" id="CHEBI:15378"/>
        <dbReference type="ChEBI" id="CHEBI:16526"/>
        <dbReference type="ChEBI" id="CHEBI:62731"/>
        <dbReference type="ChEBI" id="CHEBI:84443"/>
        <dbReference type="EC" id="4.1.1.130"/>
    </reaction>
</comment>
<comment type="cofactor">
    <cofactor evidence="1">
        <name>Zn(2+)</name>
        <dbReference type="ChEBI" id="CHEBI:29105"/>
    </cofactor>
</comment>
<comment type="pathway">
    <text evidence="1">Cofactor biosynthesis; ubiquinone biosynthesis.</text>
</comment>
<comment type="subunit">
    <text evidence="1">Component of a multi-subunit COQ enzyme complex, composed of at least coq3, coq4, coq5, coq6, coq7 and coq9.</text>
</comment>
<comment type="subcellular location">
    <subcellularLocation>
        <location evidence="1">Mitochondrion inner membrane</location>
        <topology evidence="1">Peripheral membrane protein</topology>
        <orientation evidence="1">Matrix side</orientation>
    </subcellularLocation>
</comment>
<comment type="similarity">
    <text evidence="1">Belongs to the COQ4 family.</text>
</comment>
<gene>
    <name type="primary">coq4</name>
    <name type="ORF">ACLA_034360</name>
</gene>
<proteinExistence type="inferred from homology"/>